<comment type="function">
    <text evidence="1">Catalyzes the transfer of endogenously produced octanoic acid from octanoyl-acyl-carrier-protein onto the lipoyl domains of lipoate-dependent enzymes. Lipoyl-ACP can also act as a substrate although octanoyl-ACP is likely to be the physiological substrate.</text>
</comment>
<comment type="catalytic activity">
    <reaction evidence="1">
        <text>octanoyl-[ACP] + L-lysyl-[protein] = N(6)-octanoyl-L-lysyl-[protein] + holo-[ACP] + H(+)</text>
        <dbReference type="Rhea" id="RHEA:17665"/>
        <dbReference type="Rhea" id="RHEA-COMP:9636"/>
        <dbReference type="Rhea" id="RHEA-COMP:9685"/>
        <dbReference type="Rhea" id="RHEA-COMP:9752"/>
        <dbReference type="Rhea" id="RHEA-COMP:9928"/>
        <dbReference type="ChEBI" id="CHEBI:15378"/>
        <dbReference type="ChEBI" id="CHEBI:29969"/>
        <dbReference type="ChEBI" id="CHEBI:64479"/>
        <dbReference type="ChEBI" id="CHEBI:78463"/>
        <dbReference type="ChEBI" id="CHEBI:78809"/>
        <dbReference type="EC" id="2.3.1.181"/>
    </reaction>
</comment>
<comment type="pathway">
    <text evidence="1">Protein modification; protein lipoylation via endogenous pathway; protein N(6)-(lipoyl)lysine from octanoyl-[acyl-carrier-protein]: step 1/2.</text>
</comment>
<comment type="subcellular location">
    <subcellularLocation>
        <location evidence="1">Cytoplasm</location>
    </subcellularLocation>
</comment>
<comment type="miscellaneous">
    <text evidence="1">In the reaction, the free carboxyl group of octanoic acid is attached via an amide linkage to the epsilon-amino group of a specific lysine residue of lipoyl domains of lipoate-dependent enzymes.</text>
</comment>
<comment type="similarity">
    <text evidence="1">Belongs to the LipB family.</text>
</comment>
<organism>
    <name type="scientific">Rhodococcus jostii (strain RHA1)</name>
    <dbReference type="NCBI Taxonomy" id="101510"/>
    <lineage>
        <taxon>Bacteria</taxon>
        <taxon>Bacillati</taxon>
        <taxon>Actinomycetota</taxon>
        <taxon>Actinomycetes</taxon>
        <taxon>Mycobacteriales</taxon>
        <taxon>Nocardiaceae</taxon>
        <taxon>Rhodococcus</taxon>
    </lineage>
</organism>
<feature type="chain" id="PRO_0000321664" description="Octanoyltransferase">
    <location>
        <begin position="1"/>
        <end position="258"/>
    </location>
</feature>
<feature type="domain" description="BPL/LPL catalytic" evidence="2">
    <location>
        <begin position="42"/>
        <end position="226"/>
    </location>
</feature>
<feature type="active site" description="Acyl-thioester intermediate" evidence="1">
    <location>
        <position position="187"/>
    </location>
</feature>
<feature type="binding site" evidence="1">
    <location>
        <begin position="80"/>
        <end position="87"/>
    </location>
    <ligand>
        <name>substrate</name>
    </ligand>
</feature>
<feature type="binding site" evidence="1">
    <location>
        <begin position="156"/>
        <end position="158"/>
    </location>
    <ligand>
        <name>substrate</name>
    </ligand>
</feature>
<feature type="binding site" evidence="1">
    <location>
        <begin position="169"/>
        <end position="171"/>
    </location>
    <ligand>
        <name>substrate</name>
    </ligand>
</feature>
<feature type="site" description="Lowers pKa of active site Cys" evidence="1">
    <location>
        <position position="153"/>
    </location>
</feature>
<sequence length="258" mass="27561">MSSATQSARFSPSPISVEHLGTIGYVDAWDRQRELAAERAENVGTDTLLLLEHPAVYTAGRRTEPEDRPTDGTPVIDVDRGGKITWHGPGQLVGYPIVKLAEPVDVVRYVRRLEQALITVCTDLGIVCGRVDGRSGVWLPASFDNGQWLPERKVAAIGVRVQRGVALHGFSLNCNSVLTGFDAIIPCGIRDAGVTSLSRELGRDVTVEEVTPAVTAAVVAALDGELPVTEHDIERVTFDSAAAGTTSSAPTFTTVQYG</sequence>
<dbReference type="EC" id="2.3.1.181" evidence="1"/>
<dbReference type="EMBL" id="CP000431">
    <property type="protein sequence ID" value="ABG92980.1"/>
    <property type="molecule type" value="Genomic_DNA"/>
</dbReference>
<dbReference type="RefSeq" id="WP_009473797.1">
    <property type="nucleotide sequence ID" value="NC_008268.1"/>
</dbReference>
<dbReference type="SMR" id="Q0SHK6"/>
<dbReference type="KEGG" id="rha:RHA1_ro01153"/>
<dbReference type="eggNOG" id="COG0321">
    <property type="taxonomic scope" value="Bacteria"/>
</dbReference>
<dbReference type="HOGENOM" id="CLU_035168_2_1_11"/>
<dbReference type="OrthoDB" id="9787061at2"/>
<dbReference type="UniPathway" id="UPA00538">
    <property type="reaction ID" value="UER00592"/>
</dbReference>
<dbReference type="Proteomes" id="UP000008710">
    <property type="component" value="Chromosome"/>
</dbReference>
<dbReference type="GO" id="GO:0005737">
    <property type="term" value="C:cytoplasm"/>
    <property type="evidence" value="ECO:0007669"/>
    <property type="project" value="UniProtKB-SubCell"/>
</dbReference>
<dbReference type="GO" id="GO:0033819">
    <property type="term" value="F:lipoyl(octanoyl) transferase activity"/>
    <property type="evidence" value="ECO:0007669"/>
    <property type="project" value="UniProtKB-EC"/>
</dbReference>
<dbReference type="GO" id="GO:0036211">
    <property type="term" value="P:protein modification process"/>
    <property type="evidence" value="ECO:0007669"/>
    <property type="project" value="InterPro"/>
</dbReference>
<dbReference type="CDD" id="cd16444">
    <property type="entry name" value="LipB"/>
    <property type="match status" value="1"/>
</dbReference>
<dbReference type="Gene3D" id="3.30.930.10">
    <property type="entry name" value="Bira Bifunctional Protein, Domain 2"/>
    <property type="match status" value="1"/>
</dbReference>
<dbReference type="HAMAP" id="MF_00013">
    <property type="entry name" value="LipB"/>
    <property type="match status" value="1"/>
</dbReference>
<dbReference type="InterPro" id="IPR045864">
    <property type="entry name" value="aa-tRNA-synth_II/BPL/LPL"/>
</dbReference>
<dbReference type="InterPro" id="IPR004143">
    <property type="entry name" value="BPL_LPL_catalytic"/>
</dbReference>
<dbReference type="InterPro" id="IPR000544">
    <property type="entry name" value="Octanoyltransferase"/>
</dbReference>
<dbReference type="InterPro" id="IPR020605">
    <property type="entry name" value="Octanoyltransferase_CS"/>
</dbReference>
<dbReference type="NCBIfam" id="TIGR00214">
    <property type="entry name" value="lipB"/>
    <property type="match status" value="1"/>
</dbReference>
<dbReference type="NCBIfam" id="NF010925">
    <property type="entry name" value="PRK14345.1"/>
    <property type="match status" value="1"/>
</dbReference>
<dbReference type="PANTHER" id="PTHR10993:SF7">
    <property type="entry name" value="LIPOYLTRANSFERASE 2, MITOCHONDRIAL-RELATED"/>
    <property type="match status" value="1"/>
</dbReference>
<dbReference type="PANTHER" id="PTHR10993">
    <property type="entry name" value="OCTANOYLTRANSFERASE"/>
    <property type="match status" value="1"/>
</dbReference>
<dbReference type="Pfam" id="PF21948">
    <property type="entry name" value="LplA-B_cat"/>
    <property type="match status" value="1"/>
</dbReference>
<dbReference type="PIRSF" id="PIRSF016262">
    <property type="entry name" value="LPLase"/>
    <property type="match status" value="1"/>
</dbReference>
<dbReference type="SUPFAM" id="SSF55681">
    <property type="entry name" value="Class II aaRS and biotin synthetases"/>
    <property type="match status" value="1"/>
</dbReference>
<dbReference type="PROSITE" id="PS51733">
    <property type="entry name" value="BPL_LPL_CATALYTIC"/>
    <property type="match status" value="1"/>
</dbReference>
<dbReference type="PROSITE" id="PS01313">
    <property type="entry name" value="LIPB"/>
    <property type="match status" value="1"/>
</dbReference>
<protein>
    <recommendedName>
        <fullName evidence="1">Octanoyltransferase</fullName>
        <ecNumber evidence="1">2.3.1.181</ecNumber>
    </recommendedName>
    <alternativeName>
        <fullName evidence="1">Lipoate-protein ligase B</fullName>
    </alternativeName>
    <alternativeName>
        <fullName evidence="1">Lipoyl/octanoyl transferase</fullName>
    </alternativeName>
    <alternativeName>
        <fullName evidence="1">Octanoyl-[acyl-carrier-protein]-protein N-octanoyltransferase</fullName>
    </alternativeName>
</protein>
<keyword id="KW-0012">Acyltransferase</keyword>
<keyword id="KW-0963">Cytoplasm</keyword>
<keyword id="KW-0808">Transferase</keyword>
<evidence type="ECO:0000255" key="1">
    <source>
        <dbReference type="HAMAP-Rule" id="MF_00013"/>
    </source>
</evidence>
<evidence type="ECO:0000255" key="2">
    <source>
        <dbReference type="PROSITE-ProRule" id="PRU01067"/>
    </source>
</evidence>
<proteinExistence type="inferred from homology"/>
<gene>
    <name evidence="1" type="primary">lipB</name>
    <name type="ordered locus">RHA1_ro01153</name>
</gene>
<accession>Q0SHK6</accession>
<reference key="1">
    <citation type="journal article" date="2006" name="Proc. Natl. Acad. Sci. U.S.A.">
        <title>The complete genome of Rhodococcus sp. RHA1 provides insights into a catabolic powerhouse.</title>
        <authorList>
            <person name="McLeod M.P."/>
            <person name="Warren R.L."/>
            <person name="Hsiao W.W.L."/>
            <person name="Araki N."/>
            <person name="Myhre M."/>
            <person name="Fernandes C."/>
            <person name="Miyazawa D."/>
            <person name="Wong W."/>
            <person name="Lillquist A.L."/>
            <person name="Wang D."/>
            <person name="Dosanjh M."/>
            <person name="Hara H."/>
            <person name="Petrescu A."/>
            <person name="Morin R.D."/>
            <person name="Yang G."/>
            <person name="Stott J.M."/>
            <person name="Schein J.E."/>
            <person name="Shin H."/>
            <person name="Smailus D."/>
            <person name="Siddiqui A.S."/>
            <person name="Marra M.A."/>
            <person name="Jones S.J.M."/>
            <person name="Holt R."/>
            <person name="Brinkman F.S.L."/>
            <person name="Miyauchi K."/>
            <person name="Fukuda M."/>
            <person name="Davies J.E."/>
            <person name="Mohn W.W."/>
            <person name="Eltis L.D."/>
        </authorList>
    </citation>
    <scope>NUCLEOTIDE SEQUENCE [LARGE SCALE GENOMIC DNA]</scope>
    <source>
        <strain>RHA1</strain>
    </source>
</reference>
<name>LIPB_RHOJR</name>